<proteinExistence type="inferred from homology"/>
<feature type="chain" id="PRO_1000091329" description="Leucine--tRNA ligase">
    <location>
        <begin position="1"/>
        <end position="804"/>
    </location>
</feature>
<feature type="short sequence motif" description="'HIGH' region">
    <location>
        <begin position="39"/>
        <end position="50"/>
    </location>
</feature>
<feature type="short sequence motif" description="'KMSKS' region">
    <location>
        <begin position="573"/>
        <end position="577"/>
    </location>
</feature>
<feature type="binding site" evidence="1">
    <location>
        <position position="576"/>
    </location>
    <ligand>
        <name>ATP</name>
        <dbReference type="ChEBI" id="CHEBI:30616"/>
    </ligand>
</feature>
<dbReference type="EC" id="6.1.1.4" evidence="1"/>
<dbReference type="EMBL" id="AE017198">
    <property type="protein sequence ID" value="AAS08498.1"/>
    <property type="molecule type" value="Genomic_DNA"/>
</dbReference>
<dbReference type="RefSeq" id="WP_011161628.1">
    <property type="nucleotide sequence ID" value="NC_005362.1"/>
</dbReference>
<dbReference type="SMR" id="Q74KS1"/>
<dbReference type="KEGG" id="ljo:LJ_0680"/>
<dbReference type="eggNOG" id="COG0495">
    <property type="taxonomic scope" value="Bacteria"/>
</dbReference>
<dbReference type="HOGENOM" id="CLU_004427_0_0_9"/>
<dbReference type="Proteomes" id="UP000000581">
    <property type="component" value="Chromosome"/>
</dbReference>
<dbReference type="GO" id="GO:0005829">
    <property type="term" value="C:cytosol"/>
    <property type="evidence" value="ECO:0007669"/>
    <property type="project" value="TreeGrafter"/>
</dbReference>
<dbReference type="GO" id="GO:0002161">
    <property type="term" value="F:aminoacyl-tRNA deacylase activity"/>
    <property type="evidence" value="ECO:0007669"/>
    <property type="project" value="InterPro"/>
</dbReference>
<dbReference type="GO" id="GO:0005524">
    <property type="term" value="F:ATP binding"/>
    <property type="evidence" value="ECO:0007669"/>
    <property type="project" value="UniProtKB-UniRule"/>
</dbReference>
<dbReference type="GO" id="GO:0004823">
    <property type="term" value="F:leucine-tRNA ligase activity"/>
    <property type="evidence" value="ECO:0007669"/>
    <property type="project" value="UniProtKB-UniRule"/>
</dbReference>
<dbReference type="GO" id="GO:0006429">
    <property type="term" value="P:leucyl-tRNA aminoacylation"/>
    <property type="evidence" value="ECO:0007669"/>
    <property type="project" value="UniProtKB-UniRule"/>
</dbReference>
<dbReference type="CDD" id="cd07958">
    <property type="entry name" value="Anticodon_Ia_Leu_BEm"/>
    <property type="match status" value="1"/>
</dbReference>
<dbReference type="CDD" id="cd00812">
    <property type="entry name" value="LeuRS_core"/>
    <property type="match status" value="1"/>
</dbReference>
<dbReference type="FunFam" id="1.10.730.10:FF:000012">
    <property type="entry name" value="Leucine--tRNA ligase"/>
    <property type="match status" value="1"/>
</dbReference>
<dbReference type="FunFam" id="3.10.20.590:FF:000001">
    <property type="entry name" value="Leucine--tRNA ligase"/>
    <property type="match status" value="1"/>
</dbReference>
<dbReference type="FunFam" id="3.40.50.620:FF:000056">
    <property type="entry name" value="Leucine--tRNA ligase"/>
    <property type="match status" value="1"/>
</dbReference>
<dbReference type="FunFam" id="3.40.50.620:FF:000077">
    <property type="entry name" value="Leucine--tRNA ligase"/>
    <property type="match status" value="1"/>
</dbReference>
<dbReference type="FunFam" id="1.10.730.10:FF:000011">
    <property type="entry name" value="Leucine--tRNA ligase chloroplastic/mitochondrial"/>
    <property type="match status" value="1"/>
</dbReference>
<dbReference type="Gene3D" id="3.10.20.590">
    <property type="match status" value="1"/>
</dbReference>
<dbReference type="Gene3D" id="3.40.50.620">
    <property type="entry name" value="HUPs"/>
    <property type="match status" value="2"/>
</dbReference>
<dbReference type="Gene3D" id="1.10.730.10">
    <property type="entry name" value="Isoleucyl-tRNA Synthetase, Domain 1"/>
    <property type="match status" value="1"/>
</dbReference>
<dbReference type="HAMAP" id="MF_00049_B">
    <property type="entry name" value="Leu_tRNA_synth_B"/>
    <property type="match status" value="1"/>
</dbReference>
<dbReference type="InterPro" id="IPR001412">
    <property type="entry name" value="aa-tRNA-synth_I_CS"/>
</dbReference>
<dbReference type="InterPro" id="IPR002300">
    <property type="entry name" value="aa-tRNA-synth_Ia"/>
</dbReference>
<dbReference type="InterPro" id="IPR002302">
    <property type="entry name" value="Leu-tRNA-ligase"/>
</dbReference>
<dbReference type="InterPro" id="IPR025709">
    <property type="entry name" value="Leu_tRNA-synth_edit"/>
</dbReference>
<dbReference type="InterPro" id="IPR013155">
    <property type="entry name" value="M/V/L/I-tRNA-synth_anticd-bd"/>
</dbReference>
<dbReference type="InterPro" id="IPR015413">
    <property type="entry name" value="Methionyl/Leucyl_tRNA_Synth"/>
</dbReference>
<dbReference type="InterPro" id="IPR014729">
    <property type="entry name" value="Rossmann-like_a/b/a_fold"/>
</dbReference>
<dbReference type="InterPro" id="IPR009080">
    <property type="entry name" value="tRNAsynth_Ia_anticodon-bd"/>
</dbReference>
<dbReference type="InterPro" id="IPR009008">
    <property type="entry name" value="Val/Leu/Ile-tRNA-synth_edit"/>
</dbReference>
<dbReference type="NCBIfam" id="TIGR00396">
    <property type="entry name" value="leuS_bact"/>
    <property type="match status" value="1"/>
</dbReference>
<dbReference type="PANTHER" id="PTHR43740:SF2">
    <property type="entry name" value="LEUCINE--TRNA LIGASE, MITOCHONDRIAL"/>
    <property type="match status" value="1"/>
</dbReference>
<dbReference type="PANTHER" id="PTHR43740">
    <property type="entry name" value="LEUCYL-TRNA SYNTHETASE"/>
    <property type="match status" value="1"/>
</dbReference>
<dbReference type="Pfam" id="PF08264">
    <property type="entry name" value="Anticodon_1"/>
    <property type="match status" value="1"/>
</dbReference>
<dbReference type="Pfam" id="PF00133">
    <property type="entry name" value="tRNA-synt_1"/>
    <property type="match status" value="1"/>
</dbReference>
<dbReference type="Pfam" id="PF13603">
    <property type="entry name" value="tRNA-synt_1_2"/>
    <property type="match status" value="1"/>
</dbReference>
<dbReference type="Pfam" id="PF09334">
    <property type="entry name" value="tRNA-synt_1g"/>
    <property type="match status" value="1"/>
</dbReference>
<dbReference type="PRINTS" id="PR00985">
    <property type="entry name" value="TRNASYNTHLEU"/>
</dbReference>
<dbReference type="SUPFAM" id="SSF47323">
    <property type="entry name" value="Anticodon-binding domain of a subclass of class I aminoacyl-tRNA synthetases"/>
    <property type="match status" value="1"/>
</dbReference>
<dbReference type="SUPFAM" id="SSF52374">
    <property type="entry name" value="Nucleotidylyl transferase"/>
    <property type="match status" value="1"/>
</dbReference>
<dbReference type="SUPFAM" id="SSF50677">
    <property type="entry name" value="ValRS/IleRS/LeuRS editing domain"/>
    <property type="match status" value="1"/>
</dbReference>
<dbReference type="PROSITE" id="PS00178">
    <property type="entry name" value="AA_TRNA_LIGASE_I"/>
    <property type="match status" value="1"/>
</dbReference>
<organism>
    <name type="scientific">Lactobacillus johnsonii (strain CNCM I-12250 / La1 / NCC 533)</name>
    <dbReference type="NCBI Taxonomy" id="257314"/>
    <lineage>
        <taxon>Bacteria</taxon>
        <taxon>Bacillati</taxon>
        <taxon>Bacillota</taxon>
        <taxon>Bacilli</taxon>
        <taxon>Lactobacillales</taxon>
        <taxon>Lactobacillaceae</taxon>
        <taxon>Lactobacillus</taxon>
    </lineage>
</organism>
<reference key="1">
    <citation type="journal article" date="2004" name="Proc. Natl. Acad. Sci. U.S.A.">
        <title>The genome sequence of the probiotic intestinal bacterium Lactobacillus johnsonii NCC 533.</title>
        <authorList>
            <person name="Pridmore R.D."/>
            <person name="Berger B."/>
            <person name="Desiere F."/>
            <person name="Vilanova D."/>
            <person name="Barretto C."/>
            <person name="Pittet A.-C."/>
            <person name="Zwahlen M.-C."/>
            <person name="Rouvet M."/>
            <person name="Altermann E."/>
            <person name="Barrangou R."/>
            <person name="Mollet B."/>
            <person name="Mercenier A."/>
            <person name="Klaenhammer T."/>
            <person name="Arigoni F."/>
            <person name="Schell M.A."/>
        </authorList>
    </citation>
    <scope>NUCLEOTIDE SEQUENCE [LARGE SCALE GENOMIC DNA]</scope>
    <source>
        <strain>CNCM I-1225 / La1 / NCC 533</strain>
    </source>
</reference>
<sequence>MYNHKTVEKKWQKYWAEHDTFKTGTDPKKKNYYALDMFPFPSGKGLHVGHPEGYTATDIVSRMKRAQGYNVLHPMGWDAFGLPTEQYALKTGEDPEKVTKENIANFKKQLNKLGFSYDWDREVTTSDPNYYKWTQWVFEQMYKKGLAYEAEVPVNWSPDLGTVVANEEIIDGKTERGGYPVYRRNMRQWMLKMTAYADRLLEDLDDLDWPEPVKEMQRNWIGRSEGAQVTFKVKDSDKTFDVFTTRPDTLFGVSYTVLAPESKLVQEITTPEQKEAVDAYIKKIESKSDLERTDLNKDKTGVFTGAYAVNPVNGKEVPIWISDYVLASYGTGAVMAVPAHDDRDYAFATKFGLPINRVIEGGNLEKEAFGGDGKHINSEFLDGLNNEEAKKRMIEWLEDHNVGEKKVNYKLRDWDFSRQRYWGEPIPVIHWEDGTTSLVPEDELPLRLPHATDIKPSGTPESPLANLTDWVNVVDENGRKGKRETNTMPNWAGSSWYYLRYIDPHNDKELADYDLLKKWLPVDLYIGGAEHAVRHLLYARFWHKVLYDLGVVPTKEPFQKLYNQGLILKNHEKMSKSKGNVVNPDEVIDEYGADSLRMYEMFMGPLDASIDWDDNGPASTKKFLDRVWRLFVNDLDLKAIPQEKIVDENDGELDKVYAETVKKVTEDFEALHFNTAISQMMVFMNAAQKAKTIPREYAEGFVQLLAPVAPHMMEEIWSVFGHDESIAYAKWPEYDPAKLVESTVEIMVQVNGKLRGKFKAAKDSDKDTLEKEALALDHVQKFLEGKDVKKVIVIPNKIVNIVAK</sequence>
<comment type="catalytic activity">
    <reaction evidence="1">
        <text>tRNA(Leu) + L-leucine + ATP = L-leucyl-tRNA(Leu) + AMP + diphosphate</text>
        <dbReference type="Rhea" id="RHEA:11688"/>
        <dbReference type="Rhea" id="RHEA-COMP:9613"/>
        <dbReference type="Rhea" id="RHEA-COMP:9622"/>
        <dbReference type="ChEBI" id="CHEBI:30616"/>
        <dbReference type="ChEBI" id="CHEBI:33019"/>
        <dbReference type="ChEBI" id="CHEBI:57427"/>
        <dbReference type="ChEBI" id="CHEBI:78442"/>
        <dbReference type="ChEBI" id="CHEBI:78494"/>
        <dbReference type="ChEBI" id="CHEBI:456215"/>
        <dbReference type="EC" id="6.1.1.4"/>
    </reaction>
</comment>
<comment type="subcellular location">
    <subcellularLocation>
        <location evidence="1">Cytoplasm</location>
    </subcellularLocation>
</comment>
<comment type="similarity">
    <text evidence="1">Belongs to the class-I aminoacyl-tRNA synthetase family.</text>
</comment>
<keyword id="KW-0030">Aminoacyl-tRNA synthetase</keyword>
<keyword id="KW-0067">ATP-binding</keyword>
<keyword id="KW-0963">Cytoplasm</keyword>
<keyword id="KW-0436">Ligase</keyword>
<keyword id="KW-0547">Nucleotide-binding</keyword>
<keyword id="KW-0648">Protein biosynthesis</keyword>
<gene>
    <name evidence="1" type="primary">leuS</name>
    <name type="ordered locus">LJ_0680</name>
</gene>
<name>SYL_LACJO</name>
<protein>
    <recommendedName>
        <fullName evidence="1">Leucine--tRNA ligase</fullName>
        <ecNumber evidence="1">6.1.1.4</ecNumber>
    </recommendedName>
    <alternativeName>
        <fullName evidence="1">Leucyl-tRNA synthetase</fullName>
        <shortName evidence="1">LeuRS</shortName>
    </alternativeName>
</protein>
<accession>Q74KS1</accession>
<evidence type="ECO:0000255" key="1">
    <source>
        <dbReference type="HAMAP-Rule" id="MF_00049"/>
    </source>
</evidence>